<keyword id="KW-0687">Ribonucleoprotein</keyword>
<keyword id="KW-0689">Ribosomal protein</keyword>
<keyword id="KW-0694">RNA-binding</keyword>
<keyword id="KW-0699">rRNA-binding</keyword>
<reference key="1">
    <citation type="journal article" date="2008" name="DNA Res.">
        <title>Complete genome sequence and comparative analysis of the wild-type commensal Escherichia coli strain SE11 isolated from a healthy adult.</title>
        <authorList>
            <person name="Oshima K."/>
            <person name="Toh H."/>
            <person name="Ogura Y."/>
            <person name="Sasamoto H."/>
            <person name="Morita H."/>
            <person name="Park S.-H."/>
            <person name="Ooka T."/>
            <person name="Iyoda S."/>
            <person name="Taylor T.D."/>
            <person name="Hayashi T."/>
            <person name="Itoh K."/>
            <person name="Hattori M."/>
        </authorList>
    </citation>
    <scope>NUCLEOTIDE SEQUENCE [LARGE SCALE GENOMIC DNA]</scope>
    <source>
        <strain>SE11</strain>
    </source>
</reference>
<evidence type="ECO:0000255" key="1">
    <source>
        <dbReference type="HAMAP-Rule" id="MF_00500"/>
    </source>
</evidence>
<evidence type="ECO:0000256" key="2">
    <source>
        <dbReference type="SAM" id="MobiDB-lite"/>
    </source>
</evidence>
<evidence type="ECO:0000305" key="3"/>
<gene>
    <name evidence="1" type="primary">rpsT</name>
    <name type="ordered locus">ECSE_0021</name>
</gene>
<sequence length="87" mass="9684">MANIKSAKKRAIQSEKARKHNASRRSMMRTFIKKVYAAIEAGDKAAAQKAFNEMQPIVDRQAAKGLIHKNKAARHKANLTAQINKLA</sequence>
<feature type="chain" id="PRO_1000126444" description="Small ribosomal subunit protein bS20">
    <location>
        <begin position="1"/>
        <end position="87"/>
    </location>
</feature>
<feature type="region of interest" description="Disordered" evidence="2">
    <location>
        <begin position="1"/>
        <end position="26"/>
    </location>
</feature>
<dbReference type="EMBL" id="AP009240">
    <property type="protein sequence ID" value="BAG75545.1"/>
    <property type="molecule type" value="Genomic_DNA"/>
</dbReference>
<dbReference type="RefSeq" id="WP_001274021.1">
    <property type="nucleotide sequence ID" value="NC_011415.1"/>
</dbReference>
<dbReference type="SMR" id="B6HZ18"/>
<dbReference type="GeneID" id="93777413"/>
<dbReference type="KEGG" id="ecy:ECSE_0021"/>
<dbReference type="HOGENOM" id="CLU_160655_4_0_6"/>
<dbReference type="Proteomes" id="UP000008199">
    <property type="component" value="Chromosome"/>
</dbReference>
<dbReference type="GO" id="GO:0005829">
    <property type="term" value="C:cytosol"/>
    <property type="evidence" value="ECO:0007669"/>
    <property type="project" value="TreeGrafter"/>
</dbReference>
<dbReference type="GO" id="GO:0015935">
    <property type="term" value="C:small ribosomal subunit"/>
    <property type="evidence" value="ECO:0007669"/>
    <property type="project" value="TreeGrafter"/>
</dbReference>
<dbReference type="GO" id="GO:0070181">
    <property type="term" value="F:small ribosomal subunit rRNA binding"/>
    <property type="evidence" value="ECO:0007669"/>
    <property type="project" value="TreeGrafter"/>
</dbReference>
<dbReference type="GO" id="GO:0003735">
    <property type="term" value="F:structural constituent of ribosome"/>
    <property type="evidence" value="ECO:0007669"/>
    <property type="project" value="InterPro"/>
</dbReference>
<dbReference type="GO" id="GO:0006412">
    <property type="term" value="P:translation"/>
    <property type="evidence" value="ECO:0007669"/>
    <property type="project" value="UniProtKB-UniRule"/>
</dbReference>
<dbReference type="FunFam" id="1.20.58.110:FF:000001">
    <property type="entry name" value="30S ribosomal protein S20"/>
    <property type="match status" value="1"/>
</dbReference>
<dbReference type="Gene3D" id="1.20.58.110">
    <property type="entry name" value="Ribosomal protein S20"/>
    <property type="match status" value="1"/>
</dbReference>
<dbReference type="HAMAP" id="MF_00500">
    <property type="entry name" value="Ribosomal_bS20"/>
    <property type="match status" value="1"/>
</dbReference>
<dbReference type="InterPro" id="IPR002583">
    <property type="entry name" value="Ribosomal_bS20"/>
</dbReference>
<dbReference type="InterPro" id="IPR036510">
    <property type="entry name" value="Ribosomal_bS20_sf"/>
</dbReference>
<dbReference type="NCBIfam" id="TIGR00029">
    <property type="entry name" value="S20"/>
    <property type="match status" value="1"/>
</dbReference>
<dbReference type="PANTHER" id="PTHR33398">
    <property type="entry name" value="30S RIBOSOMAL PROTEIN S20"/>
    <property type="match status" value="1"/>
</dbReference>
<dbReference type="PANTHER" id="PTHR33398:SF1">
    <property type="entry name" value="SMALL RIBOSOMAL SUBUNIT PROTEIN BS20C"/>
    <property type="match status" value="1"/>
</dbReference>
<dbReference type="Pfam" id="PF01649">
    <property type="entry name" value="Ribosomal_S20p"/>
    <property type="match status" value="1"/>
</dbReference>
<dbReference type="SUPFAM" id="SSF46992">
    <property type="entry name" value="Ribosomal protein S20"/>
    <property type="match status" value="1"/>
</dbReference>
<protein>
    <recommendedName>
        <fullName evidence="1">Small ribosomal subunit protein bS20</fullName>
    </recommendedName>
    <alternativeName>
        <fullName evidence="3">30S ribosomal protein S20</fullName>
    </alternativeName>
</protein>
<name>RS20_ECOSE</name>
<organism>
    <name type="scientific">Escherichia coli (strain SE11)</name>
    <dbReference type="NCBI Taxonomy" id="409438"/>
    <lineage>
        <taxon>Bacteria</taxon>
        <taxon>Pseudomonadati</taxon>
        <taxon>Pseudomonadota</taxon>
        <taxon>Gammaproteobacteria</taxon>
        <taxon>Enterobacterales</taxon>
        <taxon>Enterobacteriaceae</taxon>
        <taxon>Escherichia</taxon>
    </lineage>
</organism>
<accession>B6HZ18</accession>
<comment type="function">
    <text evidence="1">Binds directly to 16S ribosomal RNA.</text>
</comment>
<comment type="similarity">
    <text evidence="1">Belongs to the bacterial ribosomal protein bS20 family.</text>
</comment>
<proteinExistence type="inferred from homology"/>